<proteinExistence type="inferred from homology"/>
<feature type="chain" id="PRO_0000236784" description="Tyrosine--tRNA ligase">
    <location>
        <begin position="1"/>
        <end position="403"/>
    </location>
</feature>
<feature type="domain" description="S4 RNA-binding" evidence="1">
    <location>
        <begin position="339"/>
        <end position="400"/>
    </location>
</feature>
<feature type="short sequence motif" description="'HIGH' region">
    <location>
        <begin position="42"/>
        <end position="51"/>
    </location>
</feature>
<feature type="short sequence motif" description="'KMSKS' region">
    <location>
        <begin position="226"/>
        <end position="230"/>
    </location>
</feature>
<feature type="binding site" evidence="1">
    <location>
        <position position="229"/>
    </location>
    <ligand>
        <name>ATP</name>
        <dbReference type="ChEBI" id="CHEBI:30616"/>
    </ligand>
</feature>
<organism>
    <name type="scientific">Xanthomonas euvesicatoria pv. vesicatoria (strain 85-10)</name>
    <name type="common">Xanthomonas campestris pv. vesicatoria</name>
    <dbReference type="NCBI Taxonomy" id="316273"/>
    <lineage>
        <taxon>Bacteria</taxon>
        <taxon>Pseudomonadati</taxon>
        <taxon>Pseudomonadota</taxon>
        <taxon>Gammaproteobacteria</taxon>
        <taxon>Lysobacterales</taxon>
        <taxon>Lysobacteraceae</taxon>
        <taxon>Xanthomonas</taxon>
    </lineage>
</organism>
<comment type="function">
    <text evidence="1">Catalyzes the attachment of tyrosine to tRNA(Tyr) in a two-step reaction: tyrosine is first activated by ATP to form Tyr-AMP and then transferred to the acceptor end of tRNA(Tyr).</text>
</comment>
<comment type="catalytic activity">
    <reaction evidence="1">
        <text>tRNA(Tyr) + L-tyrosine + ATP = L-tyrosyl-tRNA(Tyr) + AMP + diphosphate + H(+)</text>
        <dbReference type="Rhea" id="RHEA:10220"/>
        <dbReference type="Rhea" id="RHEA-COMP:9706"/>
        <dbReference type="Rhea" id="RHEA-COMP:9707"/>
        <dbReference type="ChEBI" id="CHEBI:15378"/>
        <dbReference type="ChEBI" id="CHEBI:30616"/>
        <dbReference type="ChEBI" id="CHEBI:33019"/>
        <dbReference type="ChEBI" id="CHEBI:58315"/>
        <dbReference type="ChEBI" id="CHEBI:78442"/>
        <dbReference type="ChEBI" id="CHEBI:78536"/>
        <dbReference type="ChEBI" id="CHEBI:456215"/>
        <dbReference type="EC" id="6.1.1.1"/>
    </reaction>
</comment>
<comment type="subunit">
    <text evidence="1">Homodimer.</text>
</comment>
<comment type="subcellular location">
    <subcellularLocation>
        <location evidence="1">Cytoplasm</location>
    </subcellularLocation>
</comment>
<comment type="similarity">
    <text evidence="1">Belongs to the class-I aminoacyl-tRNA synthetase family. TyrS type 2 subfamily.</text>
</comment>
<dbReference type="EC" id="6.1.1.1" evidence="1"/>
<dbReference type="EMBL" id="AM039952">
    <property type="protein sequence ID" value="CAJ25741.1"/>
    <property type="molecule type" value="Genomic_DNA"/>
</dbReference>
<dbReference type="RefSeq" id="WP_011348846.1">
    <property type="nucleotide sequence ID" value="NZ_CP017190.1"/>
</dbReference>
<dbReference type="SMR" id="Q3BNC2"/>
<dbReference type="STRING" id="456327.BJD11_02565"/>
<dbReference type="GeneID" id="63993076"/>
<dbReference type="KEGG" id="xcv:XCV4010"/>
<dbReference type="eggNOG" id="COG0162">
    <property type="taxonomic scope" value="Bacteria"/>
</dbReference>
<dbReference type="HOGENOM" id="CLU_024003_5_0_6"/>
<dbReference type="Proteomes" id="UP000007069">
    <property type="component" value="Chromosome"/>
</dbReference>
<dbReference type="GO" id="GO:0005829">
    <property type="term" value="C:cytosol"/>
    <property type="evidence" value="ECO:0007669"/>
    <property type="project" value="TreeGrafter"/>
</dbReference>
<dbReference type="GO" id="GO:0005524">
    <property type="term" value="F:ATP binding"/>
    <property type="evidence" value="ECO:0007669"/>
    <property type="project" value="UniProtKB-UniRule"/>
</dbReference>
<dbReference type="GO" id="GO:0003723">
    <property type="term" value="F:RNA binding"/>
    <property type="evidence" value="ECO:0007669"/>
    <property type="project" value="UniProtKB-KW"/>
</dbReference>
<dbReference type="GO" id="GO:0004831">
    <property type="term" value="F:tyrosine-tRNA ligase activity"/>
    <property type="evidence" value="ECO:0007669"/>
    <property type="project" value="UniProtKB-UniRule"/>
</dbReference>
<dbReference type="GO" id="GO:0006437">
    <property type="term" value="P:tyrosyl-tRNA aminoacylation"/>
    <property type="evidence" value="ECO:0007669"/>
    <property type="project" value="UniProtKB-UniRule"/>
</dbReference>
<dbReference type="CDD" id="cd00165">
    <property type="entry name" value="S4"/>
    <property type="match status" value="1"/>
</dbReference>
<dbReference type="CDD" id="cd00805">
    <property type="entry name" value="TyrRS_core"/>
    <property type="match status" value="1"/>
</dbReference>
<dbReference type="FunFam" id="1.10.240.10:FF:000006">
    <property type="entry name" value="Tyrosine--tRNA ligase"/>
    <property type="match status" value="1"/>
</dbReference>
<dbReference type="FunFam" id="3.10.290.10:FF:000022">
    <property type="entry name" value="Tyrosine--tRNA ligase"/>
    <property type="match status" value="1"/>
</dbReference>
<dbReference type="FunFam" id="3.40.50.620:FF:000061">
    <property type="entry name" value="Tyrosine--tRNA ligase"/>
    <property type="match status" value="1"/>
</dbReference>
<dbReference type="Gene3D" id="3.40.50.620">
    <property type="entry name" value="HUPs"/>
    <property type="match status" value="1"/>
</dbReference>
<dbReference type="Gene3D" id="3.10.290.10">
    <property type="entry name" value="RNA-binding S4 domain"/>
    <property type="match status" value="1"/>
</dbReference>
<dbReference type="Gene3D" id="1.10.240.10">
    <property type="entry name" value="Tyrosyl-Transfer RNA Synthetase"/>
    <property type="match status" value="1"/>
</dbReference>
<dbReference type="HAMAP" id="MF_02007">
    <property type="entry name" value="Tyr_tRNA_synth_type2"/>
    <property type="match status" value="1"/>
</dbReference>
<dbReference type="InterPro" id="IPR001412">
    <property type="entry name" value="aa-tRNA-synth_I_CS"/>
</dbReference>
<dbReference type="InterPro" id="IPR002305">
    <property type="entry name" value="aa-tRNA-synth_Ic"/>
</dbReference>
<dbReference type="InterPro" id="IPR014729">
    <property type="entry name" value="Rossmann-like_a/b/a_fold"/>
</dbReference>
<dbReference type="InterPro" id="IPR002942">
    <property type="entry name" value="S4_RNA-bd"/>
</dbReference>
<dbReference type="InterPro" id="IPR036986">
    <property type="entry name" value="S4_RNA-bd_sf"/>
</dbReference>
<dbReference type="InterPro" id="IPR002307">
    <property type="entry name" value="Tyr-tRNA-ligase"/>
</dbReference>
<dbReference type="InterPro" id="IPR024088">
    <property type="entry name" value="Tyr-tRNA-ligase_bac-type"/>
</dbReference>
<dbReference type="InterPro" id="IPR024108">
    <property type="entry name" value="Tyr-tRNA-ligase_bac_2"/>
</dbReference>
<dbReference type="NCBIfam" id="TIGR00234">
    <property type="entry name" value="tyrS"/>
    <property type="match status" value="1"/>
</dbReference>
<dbReference type="PANTHER" id="PTHR11766:SF1">
    <property type="entry name" value="TYROSINE--TRNA LIGASE"/>
    <property type="match status" value="1"/>
</dbReference>
<dbReference type="PANTHER" id="PTHR11766">
    <property type="entry name" value="TYROSYL-TRNA SYNTHETASE"/>
    <property type="match status" value="1"/>
</dbReference>
<dbReference type="Pfam" id="PF00579">
    <property type="entry name" value="tRNA-synt_1b"/>
    <property type="match status" value="1"/>
</dbReference>
<dbReference type="PRINTS" id="PR01040">
    <property type="entry name" value="TRNASYNTHTYR"/>
</dbReference>
<dbReference type="SMART" id="SM00363">
    <property type="entry name" value="S4"/>
    <property type="match status" value="1"/>
</dbReference>
<dbReference type="SUPFAM" id="SSF55174">
    <property type="entry name" value="Alpha-L RNA-binding motif"/>
    <property type="match status" value="1"/>
</dbReference>
<dbReference type="SUPFAM" id="SSF52374">
    <property type="entry name" value="Nucleotidylyl transferase"/>
    <property type="match status" value="1"/>
</dbReference>
<dbReference type="PROSITE" id="PS00178">
    <property type="entry name" value="AA_TRNA_LIGASE_I"/>
    <property type="match status" value="1"/>
</dbReference>
<dbReference type="PROSITE" id="PS50889">
    <property type="entry name" value="S4"/>
    <property type="match status" value="1"/>
</dbReference>
<evidence type="ECO:0000255" key="1">
    <source>
        <dbReference type="HAMAP-Rule" id="MF_02007"/>
    </source>
</evidence>
<name>SYY_XANE5</name>
<gene>
    <name evidence="1" type="primary">tyrS</name>
    <name type="ordered locus">XCV4010</name>
</gene>
<protein>
    <recommendedName>
        <fullName evidence="1">Tyrosine--tRNA ligase</fullName>
        <ecNumber evidence="1">6.1.1.1</ecNumber>
    </recommendedName>
    <alternativeName>
        <fullName evidence="1">Tyrosyl-tRNA synthetase</fullName>
        <shortName evidence="1">TyrRS</shortName>
    </alternativeName>
</protein>
<accession>Q3BNC2</accession>
<keyword id="KW-0030">Aminoacyl-tRNA synthetase</keyword>
<keyword id="KW-0067">ATP-binding</keyword>
<keyword id="KW-0963">Cytoplasm</keyword>
<keyword id="KW-0436">Ligase</keyword>
<keyword id="KW-0547">Nucleotide-binding</keyword>
<keyword id="KW-0648">Protein biosynthesis</keyword>
<keyword id="KW-0694">RNA-binding</keyword>
<sequence length="403" mass="44475">MATIEESLALIGRGAEEILKLDQLQARLATGKPLRVKAGFDPTAPDLHLGHTVLLNKMRQFQQLGHQVIFLIGDFTGMIGDPSGKNATRKPLSREDVLANARTYEEQVFKILDRERTEVRFNSEWFGQMSAADMIKLSAQHTVARMLERDDFAKRFGSQQPIAIHEFLYPLVQGYDSVALKADVELGGTDQKFNLLMGRGLQEHYGQAPQIVLTMPLLEGLDGVAKMSKSLGNYIGINEPAIDIVTKTMKIGDELTWRWIDLLSFDISLAEAARLKEQVAAGELHPREVKLRLARELATRFHDAATAEQAIAGWHAVVTGQGDTSLLPLQEVVVPDEGLRLAGLLTAAGLTPSNSEATRKLKERAVRIDGEVVEDPSRVFTHGFEGVIQVGKRNFARVLLVTA</sequence>
<reference key="1">
    <citation type="journal article" date="2005" name="J. Bacteriol.">
        <title>Insights into genome plasticity and pathogenicity of the plant pathogenic Bacterium Xanthomonas campestris pv. vesicatoria revealed by the complete genome sequence.</title>
        <authorList>
            <person name="Thieme F."/>
            <person name="Koebnik R."/>
            <person name="Bekel T."/>
            <person name="Berger C."/>
            <person name="Boch J."/>
            <person name="Buettner D."/>
            <person name="Caldana C."/>
            <person name="Gaigalat L."/>
            <person name="Goesmann A."/>
            <person name="Kay S."/>
            <person name="Kirchner O."/>
            <person name="Lanz C."/>
            <person name="Linke B."/>
            <person name="McHardy A.C."/>
            <person name="Meyer F."/>
            <person name="Mittenhuber G."/>
            <person name="Nies D.H."/>
            <person name="Niesbach-Kloesgen U."/>
            <person name="Patschkowski T."/>
            <person name="Rueckert C."/>
            <person name="Rupp O."/>
            <person name="Schneiker S."/>
            <person name="Schuster S.C."/>
            <person name="Vorhoelter F.J."/>
            <person name="Weber E."/>
            <person name="Puehler A."/>
            <person name="Bonas U."/>
            <person name="Bartels D."/>
            <person name="Kaiser O."/>
        </authorList>
    </citation>
    <scope>NUCLEOTIDE SEQUENCE [LARGE SCALE GENOMIC DNA]</scope>
    <source>
        <strain>85-10</strain>
    </source>
</reference>